<organism>
    <name type="scientific">Variovorax paradoxus (strain S110)</name>
    <dbReference type="NCBI Taxonomy" id="543728"/>
    <lineage>
        <taxon>Bacteria</taxon>
        <taxon>Pseudomonadati</taxon>
        <taxon>Pseudomonadota</taxon>
        <taxon>Betaproteobacteria</taxon>
        <taxon>Burkholderiales</taxon>
        <taxon>Comamonadaceae</taxon>
        <taxon>Variovorax</taxon>
    </lineage>
</organism>
<evidence type="ECO:0000255" key="1">
    <source>
        <dbReference type="HAMAP-Rule" id="MF_01343"/>
    </source>
</evidence>
<evidence type="ECO:0000305" key="2"/>
<reference key="1">
    <citation type="journal article" date="2011" name="J. Bacteriol.">
        <title>Complete genome sequence of the metabolically versatile plant growth-promoting endophyte, Variovorax paradoxus S110.</title>
        <authorList>
            <person name="Han J.I."/>
            <person name="Choi H.K."/>
            <person name="Lee S.W."/>
            <person name="Orwin P.M."/>
            <person name="Kim J."/>
            <person name="Laroe S.L."/>
            <person name="Kim T.G."/>
            <person name="O'Neil J."/>
            <person name="Leadbetter J.R."/>
            <person name="Lee S.Y."/>
            <person name="Hur C.G."/>
            <person name="Spain J.C."/>
            <person name="Ovchinnikova G."/>
            <person name="Goodwin L."/>
            <person name="Han C."/>
        </authorList>
    </citation>
    <scope>NUCLEOTIDE SEQUENCE [LARGE SCALE GENOMIC DNA]</scope>
    <source>
        <strain>S110</strain>
    </source>
</reference>
<keyword id="KW-0687">Ribonucleoprotein</keyword>
<keyword id="KW-0689">Ribosomal protein</keyword>
<keyword id="KW-0694">RNA-binding</keyword>
<keyword id="KW-0699">rRNA-binding</keyword>
<name>RS15_VARPS</name>
<comment type="function">
    <text evidence="1">One of the primary rRNA binding proteins, it binds directly to 16S rRNA where it helps nucleate assembly of the platform of the 30S subunit by binding and bridging several RNA helices of the 16S rRNA.</text>
</comment>
<comment type="function">
    <text evidence="1">Forms an intersubunit bridge (bridge B4) with the 23S rRNA of the 50S subunit in the ribosome.</text>
</comment>
<comment type="subunit">
    <text evidence="1">Part of the 30S ribosomal subunit. Forms a bridge to the 50S subunit in the 70S ribosome, contacting the 23S rRNA.</text>
</comment>
<comment type="similarity">
    <text evidence="1">Belongs to the universal ribosomal protein uS15 family.</text>
</comment>
<proteinExistence type="inferred from homology"/>
<dbReference type="EMBL" id="CP001635">
    <property type="protein sequence ID" value="ACS20132.1"/>
    <property type="molecule type" value="Genomic_DNA"/>
</dbReference>
<dbReference type="SMR" id="C5CT25"/>
<dbReference type="STRING" id="543728.Vapar_3515"/>
<dbReference type="KEGG" id="vap:Vapar_3515"/>
<dbReference type="eggNOG" id="COG0184">
    <property type="taxonomic scope" value="Bacteria"/>
</dbReference>
<dbReference type="HOGENOM" id="CLU_148518_0_0_4"/>
<dbReference type="OrthoDB" id="9799262at2"/>
<dbReference type="GO" id="GO:0022627">
    <property type="term" value="C:cytosolic small ribosomal subunit"/>
    <property type="evidence" value="ECO:0007669"/>
    <property type="project" value="TreeGrafter"/>
</dbReference>
<dbReference type="GO" id="GO:0019843">
    <property type="term" value="F:rRNA binding"/>
    <property type="evidence" value="ECO:0007669"/>
    <property type="project" value="UniProtKB-UniRule"/>
</dbReference>
<dbReference type="GO" id="GO:0003735">
    <property type="term" value="F:structural constituent of ribosome"/>
    <property type="evidence" value="ECO:0007669"/>
    <property type="project" value="InterPro"/>
</dbReference>
<dbReference type="GO" id="GO:0006412">
    <property type="term" value="P:translation"/>
    <property type="evidence" value="ECO:0007669"/>
    <property type="project" value="UniProtKB-UniRule"/>
</dbReference>
<dbReference type="CDD" id="cd00353">
    <property type="entry name" value="Ribosomal_S15p_S13e"/>
    <property type="match status" value="1"/>
</dbReference>
<dbReference type="FunFam" id="1.10.287.10:FF:000002">
    <property type="entry name" value="30S ribosomal protein S15"/>
    <property type="match status" value="1"/>
</dbReference>
<dbReference type="Gene3D" id="6.10.250.3130">
    <property type="match status" value="1"/>
</dbReference>
<dbReference type="Gene3D" id="1.10.287.10">
    <property type="entry name" value="S15/NS1, RNA-binding"/>
    <property type="match status" value="1"/>
</dbReference>
<dbReference type="HAMAP" id="MF_01343_B">
    <property type="entry name" value="Ribosomal_uS15_B"/>
    <property type="match status" value="1"/>
</dbReference>
<dbReference type="InterPro" id="IPR000589">
    <property type="entry name" value="Ribosomal_uS15"/>
</dbReference>
<dbReference type="InterPro" id="IPR005290">
    <property type="entry name" value="Ribosomal_uS15_bac-type"/>
</dbReference>
<dbReference type="InterPro" id="IPR009068">
    <property type="entry name" value="uS15_NS1_RNA-bd_sf"/>
</dbReference>
<dbReference type="NCBIfam" id="TIGR00952">
    <property type="entry name" value="S15_bact"/>
    <property type="match status" value="1"/>
</dbReference>
<dbReference type="PANTHER" id="PTHR23321">
    <property type="entry name" value="RIBOSOMAL PROTEIN S15, BACTERIAL AND ORGANELLAR"/>
    <property type="match status" value="1"/>
</dbReference>
<dbReference type="PANTHER" id="PTHR23321:SF26">
    <property type="entry name" value="SMALL RIBOSOMAL SUBUNIT PROTEIN US15M"/>
    <property type="match status" value="1"/>
</dbReference>
<dbReference type="Pfam" id="PF00312">
    <property type="entry name" value="Ribosomal_S15"/>
    <property type="match status" value="1"/>
</dbReference>
<dbReference type="SMART" id="SM01387">
    <property type="entry name" value="Ribosomal_S15"/>
    <property type="match status" value="1"/>
</dbReference>
<dbReference type="SUPFAM" id="SSF47060">
    <property type="entry name" value="S15/NS1 RNA-binding domain"/>
    <property type="match status" value="1"/>
</dbReference>
<dbReference type="PROSITE" id="PS00362">
    <property type="entry name" value="RIBOSOMAL_S15"/>
    <property type="match status" value="1"/>
</dbReference>
<sequence>MIAASIKAEVVKDNARAANDTGSPEVQVALLTARINELTPHFKTHAKDHHGRRGLLRMVSRRRKLLDYLKSKDADRYTALIAKLGLRK</sequence>
<protein>
    <recommendedName>
        <fullName evidence="1">Small ribosomal subunit protein uS15</fullName>
    </recommendedName>
    <alternativeName>
        <fullName evidence="2">30S ribosomal protein S15</fullName>
    </alternativeName>
</protein>
<gene>
    <name evidence="1" type="primary">rpsO</name>
    <name type="ordered locus">Vapar_3515</name>
</gene>
<feature type="chain" id="PRO_1000214773" description="Small ribosomal subunit protein uS15">
    <location>
        <begin position="1"/>
        <end position="88"/>
    </location>
</feature>
<accession>C5CT25</accession>